<sequence>MPHRKKKPFIEKKKAVSFHLVHRSQRDPLAADETAPQRVLLPTQKVNDEERRAEQRKYGVFFDDDYDYLQHLKEPSGPAELIPSTSFATPLCDKTEDPCVYSSTGIKLPSSVFASEFEEDVGLLNKAAPVSGPRLDFDPDIVAALDDDFDFDDPENLLEDDFILQANKPTGGERMDTESEEDDGHEWEDMDDEEGSDDRSSAGFLSDGGDLSAPGSPQEAMKKHLFWEEETKSRFTEYSMTSSVMRRNEQLTLHDERFEKFYEQYDDVEIGALDNAELEGTIQVDSNRLQEVLNDYYKEKAENCVKLSTLEPFEDQDLPTNELDESEKEETITVVLEEAKEKWDCESICSTYSNLYNHPQLIKYEPKPKQIHLSSKTGIPLNVLPKKGLTAKQVERMQMINGSDLPKVSTQPRSKDETKEDKRARKQAIKEERKERRVEKKANKLAFKLEKRRQEKELLNLKKNIEGLKL</sequence>
<name>LTV1_MOUSE</name>
<proteinExistence type="evidence at protein level"/>
<organism>
    <name type="scientific">Mus musculus</name>
    <name type="common">Mouse</name>
    <dbReference type="NCBI Taxonomy" id="10090"/>
    <lineage>
        <taxon>Eukaryota</taxon>
        <taxon>Metazoa</taxon>
        <taxon>Chordata</taxon>
        <taxon>Craniata</taxon>
        <taxon>Vertebrata</taxon>
        <taxon>Euteleostomi</taxon>
        <taxon>Mammalia</taxon>
        <taxon>Eutheria</taxon>
        <taxon>Euarchontoglires</taxon>
        <taxon>Glires</taxon>
        <taxon>Rodentia</taxon>
        <taxon>Myomorpha</taxon>
        <taxon>Muroidea</taxon>
        <taxon>Muridae</taxon>
        <taxon>Murinae</taxon>
        <taxon>Mus</taxon>
        <taxon>Mus</taxon>
    </lineage>
</organism>
<accession>Q6NSQ7</accession>
<accession>Q9D0F5</accession>
<protein>
    <recommendedName>
        <fullName>Protein LTV1 homolog</fullName>
    </recommendedName>
</protein>
<dbReference type="EMBL" id="AK011491">
    <property type="protein sequence ID" value="BAB27653.1"/>
    <property type="molecule type" value="mRNA"/>
</dbReference>
<dbReference type="EMBL" id="BC067062">
    <property type="protein sequence ID" value="AAH67062.1"/>
    <property type="molecule type" value="mRNA"/>
</dbReference>
<dbReference type="EMBL" id="BC069962">
    <property type="protein sequence ID" value="AAH69962.1"/>
    <property type="molecule type" value="mRNA"/>
</dbReference>
<dbReference type="CCDS" id="CCDS35845.1"/>
<dbReference type="RefSeq" id="NP_852135.1">
    <property type="nucleotide sequence ID" value="NM_181470.4"/>
</dbReference>
<dbReference type="SMR" id="Q6NSQ7"/>
<dbReference type="BioGRID" id="237279">
    <property type="interactions" value="2"/>
</dbReference>
<dbReference type="FunCoup" id="Q6NSQ7">
    <property type="interactions" value="3086"/>
</dbReference>
<dbReference type="IntAct" id="Q6NSQ7">
    <property type="interactions" value="3"/>
</dbReference>
<dbReference type="MINT" id="Q6NSQ7"/>
<dbReference type="STRING" id="10090.ENSMUSP00000019950"/>
<dbReference type="GlyGen" id="Q6NSQ7">
    <property type="glycosylation" value="1 site, 1 O-linked glycan (1 site)"/>
</dbReference>
<dbReference type="iPTMnet" id="Q6NSQ7"/>
<dbReference type="PhosphoSitePlus" id="Q6NSQ7"/>
<dbReference type="PaxDb" id="10090-ENSMUSP00000019950"/>
<dbReference type="PeptideAtlas" id="Q6NSQ7"/>
<dbReference type="ProteomicsDB" id="293412"/>
<dbReference type="Pumba" id="Q6NSQ7"/>
<dbReference type="Ensembl" id="ENSMUST00000019950.6">
    <property type="protein sequence ID" value="ENSMUSP00000019950.5"/>
    <property type="gene ID" value="ENSMUSG00000019814.6"/>
</dbReference>
<dbReference type="GeneID" id="353258"/>
<dbReference type="KEGG" id="mmu:353258"/>
<dbReference type="UCSC" id="uc007ekp.1">
    <property type="organism name" value="mouse"/>
</dbReference>
<dbReference type="AGR" id="MGI:2447810"/>
<dbReference type="CTD" id="84946"/>
<dbReference type="MGI" id="MGI:2447810">
    <property type="gene designation" value="Ltv1"/>
</dbReference>
<dbReference type="VEuPathDB" id="HostDB:ENSMUSG00000019814"/>
<dbReference type="eggNOG" id="KOG2637">
    <property type="taxonomic scope" value="Eukaryota"/>
</dbReference>
<dbReference type="GeneTree" id="ENSGT00390000002789"/>
<dbReference type="HOGENOM" id="CLU_035718_0_0_1"/>
<dbReference type="InParanoid" id="Q6NSQ7"/>
<dbReference type="OMA" id="TKEFLFM"/>
<dbReference type="OrthoDB" id="5852896at2759"/>
<dbReference type="PhylomeDB" id="Q6NSQ7"/>
<dbReference type="TreeFam" id="TF314845"/>
<dbReference type="Reactome" id="R-MMU-6791226">
    <property type="pathway name" value="Major pathway of rRNA processing in the nucleolus and cytosol"/>
</dbReference>
<dbReference type="BioGRID-ORCS" id="353258">
    <property type="hits" value="24 hits in 78 CRISPR screens"/>
</dbReference>
<dbReference type="PRO" id="PR:Q6NSQ7"/>
<dbReference type="Proteomes" id="UP000000589">
    <property type="component" value="Chromosome 10"/>
</dbReference>
<dbReference type="RNAct" id="Q6NSQ7">
    <property type="molecule type" value="protein"/>
</dbReference>
<dbReference type="Bgee" id="ENSMUSG00000019814">
    <property type="expression patterns" value="Expressed in umbilical cord and 285 other cell types or tissues"/>
</dbReference>
<dbReference type="GO" id="GO:0005829">
    <property type="term" value="C:cytosol"/>
    <property type="evidence" value="ECO:0007669"/>
    <property type="project" value="Ensembl"/>
</dbReference>
<dbReference type="GO" id="GO:0005654">
    <property type="term" value="C:nucleoplasm"/>
    <property type="evidence" value="ECO:0007669"/>
    <property type="project" value="Ensembl"/>
</dbReference>
<dbReference type="GO" id="GO:0042274">
    <property type="term" value="P:ribosomal small subunit biogenesis"/>
    <property type="evidence" value="ECO:0007669"/>
    <property type="project" value="InterPro"/>
</dbReference>
<dbReference type="GO" id="GO:0042254">
    <property type="term" value="P:ribosome biogenesis"/>
    <property type="evidence" value="ECO:0000250"/>
    <property type="project" value="UniProtKB"/>
</dbReference>
<dbReference type="InterPro" id="IPR007307">
    <property type="entry name" value="Ltv1"/>
</dbReference>
<dbReference type="PANTHER" id="PTHR21531">
    <property type="entry name" value="LOW-TEMPERATURE VIABILITY PROTEIN LTV1-RELATED"/>
    <property type="match status" value="1"/>
</dbReference>
<dbReference type="PANTHER" id="PTHR21531:SF0">
    <property type="entry name" value="PROTEIN LTV1 HOMOLOG"/>
    <property type="match status" value="1"/>
</dbReference>
<dbReference type="Pfam" id="PF04180">
    <property type="entry name" value="LTV"/>
    <property type="match status" value="2"/>
</dbReference>
<comment type="function">
    <text evidence="1">Essential for ribosome biogenesis.</text>
</comment>
<comment type="similarity">
    <text evidence="5">Belongs to the LTV1 family.</text>
</comment>
<evidence type="ECO:0000250" key="1">
    <source>
        <dbReference type="UniProtKB" id="Q5U3J8"/>
    </source>
</evidence>
<evidence type="ECO:0000250" key="2">
    <source>
        <dbReference type="UniProtKB" id="Q96GA3"/>
    </source>
</evidence>
<evidence type="ECO:0000255" key="3"/>
<evidence type="ECO:0000256" key="4">
    <source>
        <dbReference type="SAM" id="MobiDB-lite"/>
    </source>
</evidence>
<evidence type="ECO:0000305" key="5"/>
<evidence type="ECO:0007744" key="6">
    <source>
    </source>
</evidence>
<reference key="1">
    <citation type="journal article" date="2005" name="Science">
        <title>The transcriptional landscape of the mammalian genome.</title>
        <authorList>
            <person name="Carninci P."/>
            <person name="Kasukawa T."/>
            <person name="Katayama S."/>
            <person name="Gough J."/>
            <person name="Frith M.C."/>
            <person name="Maeda N."/>
            <person name="Oyama R."/>
            <person name="Ravasi T."/>
            <person name="Lenhard B."/>
            <person name="Wells C."/>
            <person name="Kodzius R."/>
            <person name="Shimokawa K."/>
            <person name="Bajic V.B."/>
            <person name="Brenner S.E."/>
            <person name="Batalov S."/>
            <person name="Forrest A.R."/>
            <person name="Zavolan M."/>
            <person name="Davis M.J."/>
            <person name="Wilming L.G."/>
            <person name="Aidinis V."/>
            <person name="Allen J.E."/>
            <person name="Ambesi-Impiombato A."/>
            <person name="Apweiler R."/>
            <person name="Aturaliya R.N."/>
            <person name="Bailey T.L."/>
            <person name="Bansal M."/>
            <person name="Baxter L."/>
            <person name="Beisel K.W."/>
            <person name="Bersano T."/>
            <person name="Bono H."/>
            <person name="Chalk A.M."/>
            <person name="Chiu K.P."/>
            <person name="Choudhary V."/>
            <person name="Christoffels A."/>
            <person name="Clutterbuck D.R."/>
            <person name="Crowe M.L."/>
            <person name="Dalla E."/>
            <person name="Dalrymple B.P."/>
            <person name="de Bono B."/>
            <person name="Della Gatta G."/>
            <person name="di Bernardo D."/>
            <person name="Down T."/>
            <person name="Engstrom P."/>
            <person name="Fagiolini M."/>
            <person name="Faulkner G."/>
            <person name="Fletcher C.F."/>
            <person name="Fukushima T."/>
            <person name="Furuno M."/>
            <person name="Futaki S."/>
            <person name="Gariboldi M."/>
            <person name="Georgii-Hemming P."/>
            <person name="Gingeras T.R."/>
            <person name="Gojobori T."/>
            <person name="Green R.E."/>
            <person name="Gustincich S."/>
            <person name="Harbers M."/>
            <person name="Hayashi Y."/>
            <person name="Hensch T.K."/>
            <person name="Hirokawa N."/>
            <person name="Hill D."/>
            <person name="Huminiecki L."/>
            <person name="Iacono M."/>
            <person name="Ikeo K."/>
            <person name="Iwama A."/>
            <person name="Ishikawa T."/>
            <person name="Jakt M."/>
            <person name="Kanapin A."/>
            <person name="Katoh M."/>
            <person name="Kawasawa Y."/>
            <person name="Kelso J."/>
            <person name="Kitamura H."/>
            <person name="Kitano H."/>
            <person name="Kollias G."/>
            <person name="Krishnan S.P."/>
            <person name="Kruger A."/>
            <person name="Kummerfeld S.K."/>
            <person name="Kurochkin I.V."/>
            <person name="Lareau L.F."/>
            <person name="Lazarevic D."/>
            <person name="Lipovich L."/>
            <person name="Liu J."/>
            <person name="Liuni S."/>
            <person name="McWilliam S."/>
            <person name="Madan Babu M."/>
            <person name="Madera M."/>
            <person name="Marchionni L."/>
            <person name="Matsuda H."/>
            <person name="Matsuzawa S."/>
            <person name="Miki H."/>
            <person name="Mignone F."/>
            <person name="Miyake S."/>
            <person name="Morris K."/>
            <person name="Mottagui-Tabar S."/>
            <person name="Mulder N."/>
            <person name="Nakano N."/>
            <person name="Nakauchi H."/>
            <person name="Ng P."/>
            <person name="Nilsson R."/>
            <person name="Nishiguchi S."/>
            <person name="Nishikawa S."/>
            <person name="Nori F."/>
            <person name="Ohara O."/>
            <person name="Okazaki Y."/>
            <person name="Orlando V."/>
            <person name="Pang K.C."/>
            <person name="Pavan W.J."/>
            <person name="Pavesi G."/>
            <person name="Pesole G."/>
            <person name="Petrovsky N."/>
            <person name="Piazza S."/>
            <person name="Reed J."/>
            <person name="Reid J.F."/>
            <person name="Ring B.Z."/>
            <person name="Ringwald M."/>
            <person name="Rost B."/>
            <person name="Ruan Y."/>
            <person name="Salzberg S.L."/>
            <person name="Sandelin A."/>
            <person name="Schneider C."/>
            <person name="Schoenbach C."/>
            <person name="Sekiguchi K."/>
            <person name="Semple C.A."/>
            <person name="Seno S."/>
            <person name="Sessa L."/>
            <person name="Sheng Y."/>
            <person name="Shibata Y."/>
            <person name="Shimada H."/>
            <person name="Shimada K."/>
            <person name="Silva D."/>
            <person name="Sinclair B."/>
            <person name="Sperling S."/>
            <person name="Stupka E."/>
            <person name="Sugiura K."/>
            <person name="Sultana R."/>
            <person name="Takenaka Y."/>
            <person name="Taki K."/>
            <person name="Tammoja K."/>
            <person name="Tan S.L."/>
            <person name="Tang S."/>
            <person name="Taylor M.S."/>
            <person name="Tegner J."/>
            <person name="Teichmann S.A."/>
            <person name="Ueda H.R."/>
            <person name="van Nimwegen E."/>
            <person name="Verardo R."/>
            <person name="Wei C.L."/>
            <person name="Yagi K."/>
            <person name="Yamanishi H."/>
            <person name="Zabarovsky E."/>
            <person name="Zhu S."/>
            <person name="Zimmer A."/>
            <person name="Hide W."/>
            <person name="Bult C."/>
            <person name="Grimmond S.M."/>
            <person name="Teasdale R.D."/>
            <person name="Liu E.T."/>
            <person name="Brusic V."/>
            <person name="Quackenbush J."/>
            <person name="Wahlestedt C."/>
            <person name="Mattick J.S."/>
            <person name="Hume D.A."/>
            <person name="Kai C."/>
            <person name="Sasaki D."/>
            <person name="Tomaru Y."/>
            <person name="Fukuda S."/>
            <person name="Kanamori-Katayama M."/>
            <person name="Suzuki M."/>
            <person name="Aoki J."/>
            <person name="Arakawa T."/>
            <person name="Iida J."/>
            <person name="Imamura K."/>
            <person name="Itoh M."/>
            <person name="Kato T."/>
            <person name="Kawaji H."/>
            <person name="Kawagashira N."/>
            <person name="Kawashima T."/>
            <person name="Kojima M."/>
            <person name="Kondo S."/>
            <person name="Konno H."/>
            <person name="Nakano K."/>
            <person name="Ninomiya N."/>
            <person name="Nishio T."/>
            <person name="Okada M."/>
            <person name="Plessy C."/>
            <person name="Shibata K."/>
            <person name="Shiraki T."/>
            <person name="Suzuki S."/>
            <person name="Tagami M."/>
            <person name="Waki K."/>
            <person name="Watahiki A."/>
            <person name="Okamura-Oho Y."/>
            <person name="Suzuki H."/>
            <person name="Kawai J."/>
            <person name="Hayashizaki Y."/>
        </authorList>
    </citation>
    <scope>NUCLEOTIDE SEQUENCE [LARGE SCALE MRNA]</scope>
    <source>
        <strain>C57BL/6J</strain>
    </source>
</reference>
<reference key="2">
    <citation type="journal article" date="2004" name="Genome Res.">
        <title>The status, quality, and expansion of the NIH full-length cDNA project: the Mammalian Gene Collection (MGC).</title>
        <authorList>
            <consortium name="The MGC Project Team"/>
        </authorList>
    </citation>
    <scope>NUCLEOTIDE SEQUENCE [LARGE SCALE MRNA]</scope>
    <source>
        <strain>C57BL/6J</strain>
        <strain>Czech II</strain>
        <tissue>Eye</tissue>
        <tissue>Mammary tumor</tissue>
    </source>
</reference>
<reference key="3">
    <citation type="journal article" date="2010" name="Cell">
        <title>A tissue-specific atlas of mouse protein phosphorylation and expression.</title>
        <authorList>
            <person name="Huttlin E.L."/>
            <person name="Jedrychowski M.P."/>
            <person name="Elias J.E."/>
            <person name="Goswami T."/>
            <person name="Rad R."/>
            <person name="Beausoleil S.A."/>
            <person name="Villen J."/>
            <person name="Haas W."/>
            <person name="Sowa M.E."/>
            <person name="Gygi S.P."/>
        </authorList>
    </citation>
    <scope>PHOSPHORYLATION [LARGE SCALE ANALYSIS] AT SER-243</scope>
    <scope>IDENTIFICATION BY MASS SPECTROMETRY [LARGE SCALE ANALYSIS]</scope>
    <source>
        <tissue>Spleen</tissue>
    </source>
</reference>
<gene>
    <name type="primary">Ltv1</name>
</gene>
<keyword id="KW-0175">Coiled coil</keyword>
<keyword id="KW-0597">Phosphoprotein</keyword>
<keyword id="KW-1185">Reference proteome</keyword>
<keyword id="KW-0690">Ribosome biogenesis</keyword>
<feature type="chain" id="PRO_0000302814" description="Protein LTV1 homolog">
    <location>
        <begin position="1"/>
        <end position="470"/>
    </location>
</feature>
<feature type="region of interest" description="Disordered" evidence="4">
    <location>
        <begin position="25"/>
        <end position="53"/>
    </location>
</feature>
<feature type="region of interest" description="Disordered" evidence="4">
    <location>
        <begin position="162"/>
        <end position="222"/>
    </location>
</feature>
<feature type="region of interest" description="Disordered" evidence="4">
    <location>
        <begin position="400"/>
        <end position="437"/>
    </location>
</feature>
<feature type="coiled-coil region" evidence="3">
    <location>
        <begin position="414"/>
        <end position="470"/>
    </location>
</feature>
<feature type="compositionally biased region" description="Acidic residues" evidence="4">
    <location>
        <begin position="178"/>
        <end position="196"/>
    </location>
</feature>
<feature type="compositionally biased region" description="Basic and acidic residues" evidence="4">
    <location>
        <begin position="413"/>
        <end position="437"/>
    </location>
</feature>
<feature type="modified residue" description="Phosphoserine" evidence="2">
    <location>
        <position position="17"/>
    </location>
</feature>
<feature type="modified residue" description="Phosphoserine" evidence="2">
    <location>
        <position position="24"/>
    </location>
</feature>
<feature type="modified residue" description="Phosphoserine" evidence="6">
    <location>
        <position position="243"/>
    </location>
</feature>
<feature type="modified residue" description="Phosphoserine" evidence="2">
    <location>
        <position position="326"/>
    </location>
</feature>
<feature type="modified residue" description="Phosphoserine" evidence="2">
    <location>
        <position position="403"/>
    </location>
</feature>
<feature type="sequence conflict" description="In Ref. 2; AAH69962." evidence="5" ref="2">
    <original>S</original>
    <variation>T</variation>
    <location>
        <position position="86"/>
    </location>
</feature>
<feature type="sequence conflict" description="In Ref. 2; AAH69962." evidence="5" ref="2">
    <original>H</original>
    <variation>N</variation>
    <location>
        <position position="185"/>
    </location>
</feature>